<evidence type="ECO:0000250" key="1">
    <source>
        <dbReference type="UniProtKB" id="E1QU22"/>
    </source>
</evidence>
<evidence type="ECO:0000255" key="2">
    <source>
        <dbReference type="HAMAP-Rule" id="MF_01116"/>
    </source>
</evidence>
<evidence type="ECO:0000305" key="3"/>
<proteinExistence type="inferred from homology"/>
<gene>
    <name type="ordered locus">M1627_1693</name>
</gene>
<keyword id="KW-0963">Cytoplasm</keyword>
<keyword id="KW-0690">Ribosome biogenesis</keyword>
<keyword id="KW-0698">rRNA processing</keyword>
<keyword id="KW-0949">S-adenosyl-L-methionine</keyword>
<keyword id="KW-0808">Transferase</keyword>
<dbReference type="EC" id="2.5.1.157" evidence="2"/>
<dbReference type="EMBL" id="CP001401">
    <property type="protein sequence ID" value="ACP55571.1"/>
    <property type="molecule type" value="Genomic_DNA"/>
</dbReference>
<dbReference type="RefSeq" id="WP_012718923.1">
    <property type="nucleotide sequence ID" value="NC_012632.1"/>
</dbReference>
<dbReference type="SMR" id="C3N6E6"/>
<dbReference type="GeneID" id="7814685"/>
<dbReference type="KEGG" id="sim:M1627_1693"/>
<dbReference type="HOGENOM" id="CLU_035060_4_1_2"/>
<dbReference type="Proteomes" id="UP000002307">
    <property type="component" value="Chromosome"/>
</dbReference>
<dbReference type="GO" id="GO:0005737">
    <property type="term" value="C:cytoplasm"/>
    <property type="evidence" value="ECO:0007669"/>
    <property type="project" value="UniProtKB-SubCell"/>
</dbReference>
<dbReference type="GO" id="GO:0106388">
    <property type="term" value="F:18S rRNA aminocarboxypropyltransferase activity"/>
    <property type="evidence" value="ECO:0007669"/>
    <property type="project" value="InterPro"/>
</dbReference>
<dbReference type="GO" id="GO:1904047">
    <property type="term" value="F:S-adenosyl-L-methionine binding"/>
    <property type="evidence" value="ECO:0007669"/>
    <property type="project" value="UniProtKB-UniRule"/>
</dbReference>
<dbReference type="GO" id="GO:0000455">
    <property type="term" value="P:enzyme-directed rRNA pseudouridine synthesis"/>
    <property type="evidence" value="ECO:0007669"/>
    <property type="project" value="UniProtKB-UniRule"/>
</dbReference>
<dbReference type="HAMAP" id="MF_01116">
    <property type="entry name" value="TSR3"/>
    <property type="match status" value="1"/>
</dbReference>
<dbReference type="InterPro" id="IPR007209">
    <property type="entry name" value="RNaseL-inhib-like_metal-bd_dom"/>
</dbReference>
<dbReference type="InterPro" id="IPR022968">
    <property type="entry name" value="Tsr3-like"/>
</dbReference>
<dbReference type="InterPro" id="IPR007177">
    <property type="entry name" value="Tsr3_C"/>
</dbReference>
<dbReference type="NCBIfam" id="NF002621">
    <property type="entry name" value="PRK02287.1"/>
    <property type="match status" value="1"/>
</dbReference>
<dbReference type="PANTHER" id="PTHR20426:SF0">
    <property type="entry name" value="18S RRNA AMINOCARBOXYPROPYLTRANSFERASE"/>
    <property type="match status" value="1"/>
</dbReference>
<dbReference type="PANTHER" id="PTHR20426">
    <property type="entry name" value="RIBOSOME BIOGENESIS PROTEIN TSR3 HOMOLOG"/>
    <property type="match status" value="1"/>
</dbReference>
<dbReference type="Pfam" id="PF04068">
    <property type="entry name" value="Fer4_RLI"/>
    <property type="match status" value="1"/>
</dbReference>
<dbReference type="Pfam" id="PF04034">
    <property type="entry name" value="Ribo_biogen_C"/>
    <property type="match status" value="1"/>
</dbReference>
<protein>
    <recommendedName>
        <fullName evidence="2 3">16S rRNA aminocarboxypropyltransferase</fullName>
        <ecNumber evidence="2">2.5.1.157</ecNumber>
    </recommendedName>
</protein>
<organism>
    <name type="scientific">Saccharolobus islandicus (strain M.16.27)</name>
    <name type="common">Sulfolobus islandicus</name>
    <dbReference type="NCBI Taxonomy" id="427318"/>
    <lineage>
        <taxon>Archaea</taxon>
        <taxon>Thermoproteota</taxon>
        <taxon>Thermoprotei</taxon>
        <taxon>Sulfolobales</taxon>
        <taxon>Sulfolobaceae</taxon>
        <taxon>Saccharolobus</taxon>
    </lineage>
</organism>
<accession>C3N6E6</accession>
<comment type="function">
    <text evidence="2">Aminocarboxypropyltransferase that catalyzes the aminocarboxypropyl transfer on pseudouridine corresponding to position 914 in M.jannaschii 16S rRNA. It constitutes the last step in biosynthesis of the hypermodified N1-methyl-N3-(3-amino-3-carboxypropyl) pseudouridine (m1acp3-Psi).</text>
</comment>
<comment type="catalytic activity">
    <reaction evidence="2">
        <text>an N(1)-methylpseudouridine in rRNA + S-adenosyl-L-methionine = N(1)-methyl-N(3)-[(3S)-3-amino-3-carboxypropyl]pseudouridine in rRNA + S-methyl-5'-thioadenosine + H(+)</text>
        <dbReference type="Rhea" id="RHEA:63296"/>
        <dbReference type="Rhea" id="RHEA-COMP:11634"/>
        <dbReference type="Rhea" id="RHEA-COMP:16310"/>
        <dbReference type="ChEBI" id="CHEBI:15378"/>
        <dbReference type="ChEBI" id="CHEBI:17509"/>
        <dbReference type="ChEBI" id="CHEBI:59789"/>
        <dbReference type="ChEBI" id="CHEBI:74890"/>
        <dbReference type="ChEBI" id="CHEBI:146234"/>
        <dbReference type="EC" id="2.5.1.157"/>
    </reaction>
</comment>
<comment type="subcellular location">
    <subcellularLocation>
        <location evidence="2">Cytoplasm</location>
    </subcellularLocation>
</comment>
<comment type="similarity">
    <text evidence="2">Belongs to the TDD superfamily. TSR3 family.</text>
</comment>
<name>TSR3_SACI3</name>
<reference key="1">
    <citation type="journal article" date="2009" name="Proc. Natl. Acad. Sci. U.S.A.">
        <title>Biogeography of the Sulfolobus islandicus pan-genome.</title>
        <authorList>
            <person name="Reno M.L."/>
            <person name="Held N.L."/>
            <person name="Fields C.J."/>
            <person name="Burke P.V."/>
            <person name="Whitaker R.J."/>
        </authorList>
    </citation>
    <scope>NUCLEOTIDE SEQUENCE [LARGE SCALE GENOMIC DNA]</scope>
    <source>
        <strain>M.16.27</strain>
    </source>
</reference>
<sequence length="166" mass="19346">MKVYVIDYHKDDPKKCTGRKLVKLKLAELTRVGRGIILNPFSERTLSINDKDILIKSGITIIDTSWNNTSQNEFKNVRGEHRRLPILFAGNPIHYGIAYKLSSLEALMATLYILDEMKEAIKFSNVVKWGHTFIELNKELLEAYRNKDEEEIKKIEKEIIEKILRK</sequence>
<feature type="chain" id="PRO_1000213599" description="16S rRNA aminocarboxypropyltransferase">
    <location>
        <begin position="1"/>
        <end position="166"/>
    </location>
</feature>
<feature type="binding site" evidence="1 2">
    <location>
        <position position="17"/>
    </location>
    <ligand>
        <name>S-adenosyl-L-methionine</name>
        <dbReference type="ChEBI" id="CHEBI:59789"/>
    </ligand>
</feature>
<feature type="binding site" evidence="1 2">
    <location>
        <position position="62"/>
    </location>
    <ligand>
        <name>S-adenosyl-L-methionine</name>
        <dbReference type="ChEBI" id="CHEBI:59789"/>
    </ligand>
</feature>
<feature type="binding site" evidence="1 2">
    <location>
        <position position="84"/>
    </location>
    <ligand>
        <name>S-adenosyl-L-methionine</name>
        <dbReference type="ChEBI" id="CHEBI:59789"/>
    </ligand>
</feature>
<feature type="binding site" evidence="1 2">
    <location>
        <position position="99"/>
    </location>
    <ligand>
        <name>S-adenosyl-L-methionine</name>
        <dbReference type="ChEBI" id="CHEBI:59789"/>
    </ligand>
</feature>
<feature type="binding site" evidence="2">
    <location>
        <position position="103"/>
    </location>
    <ligand>
        <name>S-adenosyl-L-methionine</name>
        <dbReference type="ChEBI" id="CHEBI:59789"/>
    </ligand>
</feature>